<feature type="chain" id="PRO_0000377352" description="tRNA dimethylallyltransferase 2">
    <location>
        <begin position="1"/>
        <end position="311"/>
    </location>
</feature>
<feature type="region of interest" description="Interaction with substrate tRNA" evidence="1">
    <location>
        <begin position="40"/>
        <end position="43"/>
    </location>
</feature>
<feature type="binding site" evidence="1">
    <location>
        <begin position="15"/>
        <end position="22"/>
    </location>
    <ligand>
        <name>ATP</name>
        <dbReference type="ChEBI" id="CHEBI:30616"/>
    </ligand>
</feature>
<feature type="binding site" evidence="1">
    <location>
        <begin position="17"/>
        <end position="22"/>
    </location>
    <ligand>
        <name>substrate</name>
    </ligand>
</feature>
<feature type="site" description="Interaction with substrate tRNA" evidence="1">
    <location>
        <position position="106"/>
    </location>
</feature>
<feature type="site" description="Interaction with substrate tRNA" evidence="1">
    <location>
        <position position="128"/>
    </location>
</feature>
<dbReference type="EC" id="2.5.1.75" evidence="1"/>
<dbReference type="EMBL" id="CP000252">
    <property type="protein sequence ID" value="ABC77824.1"/>
    <property type="molecule type" value="Genomic_DNA"/>
</dbReference>
<dbReference type="RefSeq" id="WP_011417845.1">
    <property type="nucleotide sequence ID" value="NC_007759.1"/>
</dbReference>
<dbReference type="SMR" id="Q2LUR0"/>
<dbReference type="FunCoup" id="Q2LUR0">
    <property type="interactions" value="421"/>
</dbReference>
<dbReference type="STRING" id="56780.SYN_02888"/>
<dbReference type="KEGG" id="sat:SYN_02888"/>
<dbReference type="eggNOG" id="COG0324">
    <property type="taxonomic scope" value="Bacteria"/>
</dbReference>
<dbReference type="HOGENOM" id="CLU_032616_0_1_7"/>
<dbReference type="InParanoid" id="Q2LUR0"/>
<dbReference type="OrthoDB" id="9776390at2"/>
<dbReference type="Proteomes" id="UP000001933">
    <property type="component" value="Chromosome"/>
</dbReference>
<dbReference type="GO" id="GO:0005524">
    <property type="term" value="F:ATP binding"/>
    <property type="evidence" value="ECO:0007669"/>
    <property type="project" value="UniProtKB-UniRule"/>
</dbReference>
<dbReference type="GO" id="GO:0052381">
    <property type="term" value="F:tRNA dimethylallyltransferase activity"/>
    <property type="evidence" value="ECO:0007669"/>
    <property type="project" value="UniProtKB-UniRule"/>
</dbReference>
<dbReference type="GO" id="GO:0006400">
    <property type="term" value="P:tRNA modification"/>
    <property type="evidence" value="ECO:0007669"/>
    <property type="project" value="TreeGrafter"/>
</dbReference>
<dbReference type="Gene3D" id="1.10.20.140">
    <property type="match status" value="1"/>
</dbReference>
<dbReference type="Gene3D" id="3.40.50.300">
    <property type="entry name" value="P-loop containing nucleotide triphosphate hydrolases"/>
    <property type="match status" value="1"/>
</dbReference>
<dbReference type="HAMAP" id="MF_00185">
    <property type="entry name" value="IPP_trans"/>
    <property type="match status" value="1"/>
</dbReference>
<dbReference type="InterPro" id="IPR039657">
    <property type="entry name" value="Dimethylallyltransferase"/>
</dbReference>
<dbReference type="InterPro" id="IPR018022">
    <property type="entry name" value="IPT"/>
</dbReference>
<dbReference type="InterPro" id="IPR027417">
    <property type="entry name" value="P-loop_NTPase"/>
</dbReference>
<dbReference type="NCBIfam" id="TIGR00174">
    <property type="entry name" value="miaA"/>
    <property type="match status" value="1"/>
</dbReference>
<dbReference type="PANTHER" id="PTHR11088">
    <property type="entry name" value="TRNA DIMETHYLALLYLTRANSFERASE"/>
    <property type="match status" value="1"/>
</dbReference>
<dbReference type="PANTHER" id="PTHR11088:SF60">
    <property type="entry name" value="TRNA DIMETHYLALLYLTRANSFERASE"/>
    <property type="match status" value="1"/>
</dbReference>
<dbReference type="Pfam" id="PF01715">
    <property type="entry name" value="IPPT"/>
    <property type="match status" value="1"/>
</dbReference>
<dbReference type="SUPFAM" id="SSF52540">
    <property type="entry name" value="P-loop containing nucleoside triphosphate hydrolases"/>
    <property type="match status" value="2"/>
</dbReference>
<organism>
    <name type="scientific">Syntrophus aciditrophicus (strain SB)</name>
    <dbReference type="NCBI Taxonomy" id="56780"/>
    <lineage>
        <taxon>Bacteria</taxon>
        <taxon>Pseudomonadati</taxon>
        <taxon>Thermodesulfobacteriota</taxon>
        <taxon>Syntrophia</taxon>
        <taxon>Syntrophales</taxon>
        <taxon>Syntrophaceae</taxon>
        <taxon>Syntrophus</taxon>
    </lineage>
</organism>
<proteinExistence type="inferred from homology"/>
<protein>
    <recommendedName>
        <fullName evidence="1">tRNA dimethylallyltransferase 2</fullName>
        <ecNumber evidence="1">2.5.1.75</ecNumber>
    </recommendedName>
    <alternativeName>
        <fullName evidence="1">Dimethylallyl diphosphate:tRNA dimethylallyltransferase 2</fullName>
        <shortName evidence="1">DMAPP:tRNA dimethylallyltransferase 2</shortName>
        <shortName evidence="1">DMATase 2</shortName>
    </alternativeName>
    <alternativeName>
        <fullName evidence="1">Isopentenyl-diphosphate:tRNA isopentenyltransferase 2</fullName>
        <shortName evidence="1">IPP transferase 2</shortName>
        <shortName evidence="1">IPPT 2</shortName>
        <shortName evidence="1">IPTase 2</shortName>
    </alternativeName>
</protein>
<accession>Q2LUR0</accession>
<evidence type="ECO:0000255" key="1">
    <source>
        <dbReference type="HAMAP-Rule" id="MF_00185"/>
    </source>
</evidence>
<keyword id="KW-0067">ATP-binding</keyword>
<keyword id="KW-0460">Magnesium</keyword>
<keyword id="KW-0547">Nucleotide-binding</keyword>
<keyword id="KW-1185">Reference proteome</keyword>
<keyword id="KW-0808">Transferase</keyword>
<keyword id="KW-0819">tRNA processing</keyword>
<sequence>MTGSIEKPRLIVVMGPTAVGKTAAAIRLAKQWGGEIISADSMQVYRHMDIGTAKPTPDQQCRVPHHLIDIVNPDESFNAACFMERARAVIAELHKRGKKIIVVGGTGLYIRAVLGGLFDGPAADEALRRHYFTILEREGKAGLYGMLKARDRRAAAIIHPNDTTRMIRALEVLDLTGVSIVEQQQEHRFAQRPYRVLKIGLRCSRSVLYERIEARTEEMLAQGFLDEVRQLLDMGFHEGLRPMQALGYRQMVGFLKGELDLDEAVDQLKRETRRYAKRQLTWFGADPEIRWFEPGNEEEILRYAGRFLRGE</sequence>
<name>MIAA2_SYNAS</name>
<comment type="function">
    <text evidence="1">Catalyzes the transfer of a dimethylallyl group onto the adenine at position 37 in tRNAs that read codons beginning with uridine, leading to the formation of N6-(dimethylallyl)adenosine (i(6)A).</text>
</comment>
<comment type="catalytic activity">
    <reaction evidence="1">
        <text>adenosine(37) in tRNA + dimethylallyl diphosphate = N(6)-dimethylallyladenosine(37) in tRNA + diphosphate</text>
        <dbReference type="Rhea" id="RHEA:26482"/>
        <dbReference type="Rhea" id="RHEA-COMP:10162"/>
        <dbReference type="Rhea" id="RHEA-COMP:10375"/>
        <dbReference type="ChEBI" id="CHEBI:33019"/>
        <dbReference type="ChEBI" id="CHEBI:57623"/>
        <dbReference type="ChEBI" id="CHEBI:74411"/>
        <dbReference type="ChEBI" id="CHEBI:74415"/>
        <dbReference type="EC" id="2.5.1.75"/>
    </reaction>
</comment>
<comment type="cofactor">
    <cofactor evidence="1">
        <name>Mg(2+)</name>
        <dbReference type="ChEBI" id="CHEBI:18420"/>
    </cofactor>
</comment>
<comment type="subunit">
    <text evidence="1">Monomer.</text>
</comment>
<comment type="similarity">
    <text evidence="1">Belongs to the IPP transferase family.</text>
</comment>
<reference key="1">
    <citation type="journal article" date="2007" name="Proc. Natl. Acad. Sci. U.S.A.">
        <title>The genome of Syntrophus aciditrophicus: life at the thermodynamic limit of microbial growth.</title>
        <authorList>
            <person name="McInerney M.J."/>
            <person name="Rohlin L."/>
            <person name="Mouttaki H."/>
            <person name="Kim U."/>
            <person name="Krupp R.S."/>
            <person name="Rios-Hernandez L."/>
            <person name="Sieber J."/>
            <person name="Struchtemeyer C.G."/>
            <person name="Bhattacharyya A."/>
            <person name="Campbell J.W."/>
            <person name="Gunsalus R.P."/>
        </authorList>
    </citation>
    <scope>NUCLEOTIDE SEQUENCE [LARGE SCALE GENOMIC DNA]</scope>
    <source>
        <strain>SB</strain>
    </source>
</reference>
<gene>
    <name evidence="1" type="primary">miaA2</name>
    <name type="ordered locus">SYNAS_19450</name>
    <name type="ORF">SYN_02888</name>
</gene>